<sequence length="466" mass="49933">MSSLVLKRFSSTFTAKPIPSKAHHHIPLPSSSFPSGYALTGIHAGVKKQAGVPDLSVILSTSEHPTSAAACFTRNAFKAAPVLVSDEVLKKNGGWAKAVVVNSGCANAVTGKQGMDDAWAMVKATDALLPPSAKFEHQTLVMSTGVIGQNLPISKILSGIRESKETLNSDFSAWERAAQAFMTTDTFPKLRSRVFKINGFEYRMAGMDKGAGMIHPNMGPATTFKPKQLHATLLGCILTDAAVSPKSLQDALTYAVDRSFNSISVDGDMSTNDSIYALANGAAKGPLIDEETDKEAYEVFKKELTDFATDLAQLVVRDGEGATKFVTVTVKGAPSYRDAHNIASRISTSALVKTALYGEDANWGRILAASGSVPLLPSSSTGEPLTIDPTKVSVTFIPSDGTSPLPVLVNGEPEVVDEVRAKEIMTLEDFEIFVNLGMSDDPEGEAKYWTCDFSYEYVRINGDYRS</sequence>
<gene>
    <name type="ORF">LACBIDRAFT_324786</name>
</gene>
<keyword id="KW-0012">Acyltransferase</keyword>
<keyword id="KW-0028">Amino-acid biosynthesis</keyword>
<keyword id="KW-0055">Arginine biosynthesis</keyword>
<keyword id="KW-0068">Autocatalytic cleavage</keyword>
<keyword id="KW-0496">Mitochondrion</keyword>
<keyword id="KW-0511">Multifunctional enzyme</keyword>
<keyword id="KW-1185">Reference proteome</keyword>
<keyword id="KW-0808">Transferase</keyword>
<keyword id="KW-0809">Transit peptide</keyword>
<reference key="1">
    <citation type="journal article" date="2008" name="Nature">
        <title>The genome of Laccaria bicolor provides insights into mycorrhizal symbiosis.</title>
        <authorList>
            <person name="Martin F."/>
            <person name="Aerts A."/>
            <person name="Ahren D."/>
            <person name="Brun A."/>
            <person name="Danchin E.G.J."/>
            <person name="Duchaussoy F."/>
            <person name="Gibon J."/>
            <person name="Kohler A."/>
            <person name="Lindquist E."/>
            <person name="Pereda V."/>
            <person name="Salamov A."/>
            <person name="Shapiro H.J."/>
            <person name="Wuyts J."/>
            <person name="Blaudez D."/>
            <person name="Buee M."/>
            <person name="Brokstein P."/>
            <person name="Canbaeck B."/>
            <person name="Cohen D."/>
            <person name="Courty P.E."/>
            <person name="Coutinho P.M."/>
            <person name="Delaruelle C."/>
            <person name="Detter J.C."/>
            <person name="Deveau A."/>
            <person name="DiFazio S."/>
            <person name="Duplessis S."/>
            <person name="Fraissinet-Tachet L."/>
            <person name="Lucic E."/>
            <person name="Frey-Klett P."/>
            <person name="Fourrey C."/>
            <person name="Feussner I."/>
            <person name="Gay G."/>
            <person name="Grimwood J."/>
            <person name="Hoegger P.J."/>
            <person name="Jain P."/>
            <person name="Kilaru S."/>
            <person name="Labbe J."/>
            <person name="Lin Y.C."/>
            <person name="Legue V."/>
            <person name="Le Tacon F."/>
            <person name="Marmeisse R."/>
            <person name="Melayah D."/>
            <person name="Montanini B."/>
            <person name="Muratet M."/>
            <person name="Nehls U."/>
            <person name="Niculita-Hirzel H."/>
            <person name="Oudot-Le Secq M.P."/>
            <person name="Peter M."/>
            <person name="Quesneville H."/>
            <person name="Rajashekar B."/>
            <person name="Reich M."/>
            <person name="Rouhier N."/>
            <person name="Schmutz J."/>
            <person name="Yin T."/>
            <person name="Chalot M."/>
            <person name="Henrissat B."/>
            <person name="Kuees U."/>
            <person name="Lucas S."/>
            <person name="Van de Peer Y."/>
            <person name="Podila G.K."/>
            <person name="Polle A."/>
            <person name="Pukkila P.J."/>
            <person name="Richardson P.M."/>
            <person name="Rouze P."/>
            <person name="Sanders I.R."/>
            <person name="Stajich J.E."/>
            <person name="Tunlid A."/>
            <person name="Tuskan G."/>
            <person name="Grigoriev I.V."/>
        </authorList>
    </citation>
    <scope>NUCLEOTIDE SEQUENCE [LARGE SCALE GENOMIC DNA]</scope>
    <source>
        <strain>S238N-H82 / ATCC MYA-4686</strain>
    </source>
</reference>
<organism>
    <name type="scientific">Laccaria bicolor (strain S238N-H82 / ATCC MYA-4686)</name>
    <name type="common">Bicoloured deceiver</name>
    <name type="synonym">Laccaria laccata var. bicolor</name>
    <dbReference type="NCBI Taxonomy" id="486041"/>
    <lineage>
        <taxon>Eukaryota</taxon>
        <taxon>Fungi</taxon>
        <taxon>Dikarya</taxon>
        <taxon>Basidiomycota</taxon>
        <taxon>Agaricomycotina</taxon>
        <taxon>Agaricomycetes</taxon>
        <taxon>Agaricomycetidae</taxon>
        <taxon>Agaricales</taxon>
        <taxon>Agaricineae</taxon>
        <taxon>Hydnangiaceae</taxon>
        <taxon>Laccaria</taxon>
    </lineage>
</organism>
<accession>B0D316</accession>
<name>ARGJ_LACBS</name>
<dbReference type="EC" id="2.3.1.35" evidence="1"/>
<dbReference type="EC" id="2.3.1.1" evidence="1"/>
<dbReference type="EMBL" id="DS547096">
    <property type="protein sequence ID" value="EDR11196.1"/>
    <property type="molecule type" value="Genomic_DNA"/>
</dbReference>
<dbReference type="RefSeq" id="XP_001878497.1">
    <property type="nucleotide sequence ID" value="XM_001878462.1"/>
</dbReference>
<dbReference type="SMR" id="B0D316"/>
<dbReference type="FunCoup" id="B0D316">
    <property type="interactions" value="179"/>
</dbReference>
<dbReference type="STRING" id="486041.B0D316"/>
<dbReference type="MEROPS" id="T05.001"/>
<dbReference type="GeneID" id="6074080"/>
<dbReference type="KEGG" id="lbc:LACBIDRAFT_324786"/>
<dbReference type="HOGENOM" id="CLU_027172_1_0_1"/>
<dbReference type="InParanoid" id="B0D316"/>
<dbReference type="OrthoDB" id="2017946at2759"/>
<dbReference type="UniPathway" id="UPA00068">
    <property type="reaction ID" value="UER00106"/>
</dbReference>
<dbReference type="UniPathway" id="UPA00068">
    <property type="reaction ID" value="UER00111"/>
</dbReference>
<dbReference type="Proteomes" id="UP000001194">
    <property type="component" value="Unassembled WGS sequence"/>
</dbReference>
<dbReference type="GO" id="GO:0005759">
    <property type="term" value="C:mitochondrial matrix"/>
    <property type="evidence" value="ECO:0007669"/>
    <property type="project" value="UniProtKB-SubCell"/>
</dbReference>
<dbReference type="GO" id="GO:0004358">
    <property type="term" value="F:glutamate N-acetyltransferase activity"/>
    <property type="evidence" value="ECO:0007669"/>
    <property type="project" value="UniProtKB-UniRule"/>
</dbReference>
<dbReference type="GO" id="GO:0004042">
    <property type="term" value="F:L-glutamate N-acetyltransferase activity"/>
    <property type="evidence" value="ECO:0007669"/>
    <property type="project" value="UniProtKB-UniRule"/>
</dbReference>
<dbReference type="GO" id="GO:0006526">
    <property type="term" value="P:L-arginine biosynthetic process"/>
    <property type="evidence" value="ECO:0007669"/>
    <property type="project" value="UniProtKB-UniRule"/>
</dbReference>
<dbReference type="GO" id="GO:0006592">
    <property type="term" value="P:ornithine biosynthetic process"/>
    <property type="evidence" value="ECO:0007669"/>
    <property type="project" value="TreeGrafter"/>
</dbReference>
<dbReference type="CDD" id="cd02152">
    <property type="entry name" value="OAT"/>
    <property type="match status" value="1"/>
</dbReference>
<dbReference type="FunFam" id="3.10.20.340:FF:000002">
    <property type="entry name" value="Arginine biosynthesis bifunctional protein ArgJ, mitochondrial"/>
    <property type="match status" value="1"/>
</dbReference>
<dbReference type="FunFam" id="3.30.2330.10:FF:000001">
    <property type="entry name" value="Arginine biosynthesis bifunctional protein ArgJ, mitochondrial"/>
    <property type="match status" value="1"/>
</dbReference>
<dbReference type="FunFam" id="3.60.70.12:FF:000002">
    <property type="entry name" value="Arginine biosynthesis bifunctional protein ArgJ, mitochondrial"/>
    <property type="match status" value="1"/>
</dbReference>
<dbReference type="Gene3D" id="3.30.2330.10">
    <property type="entry name" value="arginine biosynthesis bifunctional protein suprefamily"/>
    <property type="match status" value="1"/>
</dbReference>
<dbReference type="Gene3D" id="3.10.20.340">
    <property type="entry name" value="ArgJ beta chain, C-terminal domain"/>
    <property type="match status" value="1"/>
</dbReference>
<dbReference type="Gene3D" id="3.60.70.12">
    <property type="entry name" value="L-amino peptidase D-ALA esterase/amidase"/>
    <property type="match status" value="1"/>
</dbReference>
<dbReference type="HAMAP" id="MF_01106">
    <property type="entry name" value="ArgJ"/>
    <property type="match status" value="1"/>
</dbReference>
<dbReference type="InterPro" id="IPR002813">
    <property type="entry name" value="Arg_biosynth_ArgJ"/>
</dbReference>
<dbReference type="InterPro" id="IPR016117">
    <property type="entry name" value="ArgJ-like_dom_sf"/>
</dbReference>
<dbReference type="InterPro" id="IPR042195">
    <property type="entry name" value="ArgJ_beta_C"/>
</dbReference>
<dbReference type="NCBIfam" id="TIGR00120">
    <property type="entry name" value="ArgJ"/>
    <property type="match status" value="1"/>
</dbReference>
<dbReference type="NCBIfam" id="NF003802">
    <property type="entry name" value="PRK05388.1"/>
    <property type="match status" value="1"/>
</dbReference>
<dbReference type="PANTHER" id="PTHR23100">
    <property type="entry name" value="ARGININE BIOSYNTHESIS BIFUNCTIONAL PROTEIN ARGJ"/>
    <property type="match status" value="1"/>
</dbReference>
<dbReference type="PANTHER" id="PTHR23100:SF0">
    <property type="entry name" value="ARGININE BIOSYNTHESIS BIFUNCTIONAL PROTEIN ARGJ, MITOCHONDRIAL"/>
    <property type="match status" value="1"/>
</dbReference>
<dbReference type="Pfam" id="PF01960">
    <property type="entry name" value="ArgJ"/>
    <property type="match status" value="1"/>
</dbReference>
<dbReference type="SUPFAM" id="SSF56266">
    <property type="entry name" value="DmpA/ArgJ-like"/>
    <property type="match status" value="1"/>
</dbReference>
<feature type="transit peptide" description="Mitochondrion" evidence="1">
    <location>
        <begin position="1"/>
        <end position="9"/>
    </location>
</feature>
<feature type="chain" id="PRO_0000398056" description="Arginine biosynthesis bifunctional protein ArgJ alpha chain" evidence="1">
    <location>
        <begin position="10"/>
        <end position="231"/>
    </location>
</feature>
<feature type="chain" id="PRO_0000398057" description="Arginine biosynthesis bifunctional protein ArgJ beta chain" evidence="1">
    <location>
        <begin position="232"/>
        <end position="466"/>
    </location>
</feature>
<feature type="active site" description="Nucleophile" evidence="1">
    <location>
        <position position="232"/>
    </location>
</feature>
<feature type="binding site" evidence="1">
    <location>
        <position position="183"/>
    </location>
    <ligand>
        <name>substrate</name>
    </ligand>
</feature>
<feature type="binding site" evidence="1">
    <location>
        <position position="209"/>
    </location>
    <ligand>
        <name>substrate</name>
    </ligand>
</feature>
<feature type="binding site" evidence="1">
    <location>
        <position position="232"/>
    </location>
    <ligand>
        <name>substrate</name>
    </ligand>
</feature>
<feature type="binding site" evidence="1">
    <location>
        <position position="320"/>
    </location>
    <ligand>
        <name>substrate</name>
    </ligand>
</feature>
<feature type="binding site" evidence="1">
    <location>
        <position position="461"/>
    </location>
    <ligand>
        <name>substrate</name>
    </ligand>
</feature>
<feature type="binding site" evidence="1">
    <location>
        <position position="466"/>
    </location>
    <ligand>
        <name>substrate</name>
    </ligand>
</feature>
<feature type="site" description="Involved in the stabilization of negative charge on the oxyanion by the formation of the oxyanion hole" evidence="1">
    <location>
        <position position="144"/>
    </location>
</feature>
<feature type="site" description="Involved in the stabilization of negative charge on the oxyanion by the formation of the oxyanion hole" evidence="1">
    <location>
        <position position="145"/>
    </location>
</feature>
<feature type="site" description="Cleavage; by autolysis" evidence="1">
    <location>
        <begin position="231"/>
        <end position="232"/>
    </location>
</feature>
<evidence type="ECO:0000255" key="1">
    <source>
        <dbReference type="HAMAP-Rule" id="MF_03124"/>
    </source>
</evidence>
<proteinExistence type="inferred from homology"/>
<comment type="function">
    <text evidence="1">Catalyzes two activities which are involved in the cyclic version of arginine biosynthesis: the synthesis of acetylglutamate from glutamate and acetyl-CoA, and of ornithine by transacetylation between acetylornithine and glutamate.</text>
</comment>
<comment type="catalytic activity">
    <reaction evidence="1">
        <text>N(2)-acetyl-L-ornithine + L-glutamate = N-acetyl-L-glutamate + L-ornithine</text>
        <dbReference type="Rhea" id="RHEA:15349"/>
        <dbReference type="ChEBI" id="CHEBI:29985"/>
        <dbReference type="ChEBI" id="CHEBI:44337"/>
        <dbReference type="ChEBI" id="CHEBI:46911"/>
        <dbReference type="ChEBI" id="CHEBI:57805"/>
        <dbReference type="EC" id="2.3.1.35"/>
    </reaction>
</comment>
<comment type="catalytic activity">
    <reaction evidence="1">
        <text>L-glutamate + acetyl-CoA = N-acetyl-L-glutamate + CoA + H(+)</text>
        <dbReference type="Rhea" id="RHEA:24292"/>
        <dbReference type="ChEBI" id="CHEBI:15378"/>
        <dbReference type="ChEBI" id="CHEBI:29985"/>
        <dbReference type="ChEBI" id="CHEBI:44337"/>
        <dbReference type="ChEBI" id="CHEBI:57287"/>
        <dbReference type="ChEBI" id="CHEBI:57288"/>
        <dbReference type="EC" id="2.3.1.1"/>
    </reaction>
</comment>
<comment type="pathway">
    <text evidence="1">Amino-acid biosynthesis; L-arginine biosynthesis; L-ornithine and N-acetyl-L-glutamate from L-glutamate and N(2)-acetyl-L-ornithine (cyclic): step 1/1.</text>
</comment>
<comment type="pathway">
    <text evidence="1">Amino-acid biosynthesis; L-arginine biosynthesis; N(2)-acetyl-L-ornithine from L-glutamate: step 1/4.</text>
</comment>
<comment type="subunit">
    <text evidence="1">Heterodimer of an alpha and a beta chain.</text>
</comment>
<comment type="subcellular location">
    <subcellularLocation>
        <location evidence="1">Mitochondrion matrix</location>
    </subcellularLocation>
</comment>
<comment type="PTM">
    <text evidence="1">The alpha and beta chains are autoproteolytically processed from a single precursor protein within the mitochondrion.</text>
</comment>
<comment type="similarity">
    <text evidence="1">Belongs to the ArgJ family.</text>
</comment>
<protein>
    <recommendedName>
        <fullName evidence="1">Arginine biosynthesis bifunctional protein ArgJ, mitochondrial</fullName>
    </recommendedName>
    <domain>
        <recommendedName>
            <fullName evidence="1">Glutamate N-acetyltransferase</fullName>
            <shortName evidence="1">GAT</shortName>
            <ecNumber evidence="1">2.3.1.35</ecNumber>
        </recommendedName>
        <alternativeName>
            <fullName evidence="1">Ornithine acetyltransferase</fullName>
            <shortName evidence="1">OATase</shortName>
        </alternativeName>
        <alternativeName>
            <fullName evidence="1">Ornithine transacetylase</fullName>
        </alternativeName>
    </domain>
    <domain>
        <recommendedName>
            <fullName evidence="1">Amino-acid acetyltransferase</fullName>
            <ecNumber evidence="1">2.3.1.1</ecNumber>
        </recommendedName>
        <alternativeName>
            <fullName evidence="1">N-acetylglutamate synthase</fullName>
            <shortName evidence="1">AGS</shortName>
        </alternativeName>
    </domain>
    <component>
        <recommendedName>
            <fullName evidence="1">Arginine biosynthesis bifunctional protein ArgJ alpha chain</fullName>
        </recommendedName>
    </component>
    <component>
        <recommendedName>
            <fullName evidence="1">Arginine biosynthesis bifunctional protein ArgJ beta chain</fullName>
        </recommendedName>
    </component>
</protein>